<evidence type="ECO:0000250" key="1"/>
<evidence type="ECO:0000250" key="2">
    <source>
        <dbReference type="UniProtKB" id="O00206"/>
    </source>
</evidence>
<evidence type="ECO:0000250" key="3">
    <source>
        <dbReference type="UniProtKB" id="Q9QUK6"/>
    </source>
</evidence>
<evidence type="ECO:0000255" key="4"/>
<evidence type="ECO:0000255" key="5">
    <source>
        <dbReference type="PROSITE-ProRule" id="PRU00204"/>
    </source>
</evidence>
<evidence type="ECO:0000305" key="6"/>
<sequence length="841" mass="96309">MIPRIRLAVATIPAMAFLSCLRSESWDPCVQVVPNISYQCMELNFYKIPDNIPTSVKILDLSFNYLSHLDSNSFSSFPELQVLDLSRCEIQTIDDDAYQGLNYLSTLILTGNPIQSLALGAFSGLPSLQKLVAVETNLASLEDFPIGHLKTLNELNVAHNHIHSFKLPEYFSNLPNLEHLDLSKNKIENIYHEHLQVLHQVPLHNLSLDLSLNPLNFIEPGAFNKIRLNGLTLRSNFNSSDVMKTCIQGLAGSKVNQLVLGEFKNERNLESFDKSVLEELCNLTLEQFRIAHFGEFPDDVSDLFNCLANASVISLLSLNLHGLEALPNDFRWQHLEVVNCKLQQFPALKFNSLKKFVFKDNKHMHTFTEINLPNLQFLDLSGNHLSFKGCCSHNEFGTTKLKHLDLSFNEIITMKSNFMGLEQLEYLDFQHSSLKQANDFSIFLSLRNLHYLDISYTNIHVVFRGIFAGLVSLQTLKMAGNSFQNNLLPDVFTDLTNLILLDLSKCQLEQVSQRAFHSLPRLQVLNMSHNRLLFLDTLPYKPLHSLRILDCSYNLIVASKEQELQHLPRSLAFLNLTKNDFSCACEHQTFLQWVKDQKQLLVGAEQMVCTQPLEMQDLPVLSFRNATCQISEAVISASVLTFLLVSVAGILVYKFYFHLLLFVGCKKYGRGESTYDAFVIYSSQDEDWVRNELVKNLEEGVPPFHLCLHYRDFIPGVAIAANIIQEGFHKSRKVIVVVSQHFIQSRWCIFEYEIAQTWQFLRSHAGIIFIVLQKLEKSLLRQQVELYRLLSRNTYLEWEDSVLGRHIFWRRLKKALLDGKPWSPEGTEDSESNQHDTTAFT</sequence>
<keyword id="KW-1003">Cell membrane</keyword>
<keyword id="KW-0966">Cell projection</keyword>
<keyword id="KW-1015">Disulfide bond</keyword>
<keyword id="KW-0967">Endosome</keyword>
<keyword id="KW-0325">Glycoprotein</keyword>
<keyword id="KW-0391">Immunity</keyword>
<keyword id="KW-0395">Inflammatory response</keyword>
<keyword id="KW-0399">Innate immunity</keyword>
<keyword id="KW-0433">Leucine-rich repeat</keyword>
<keyword id="KW-0472">Membrane</keyword>
<keyword id="KW-0520">NAD</keyword>
<keyword id="KW-0675">Receptor</keyword>
<keyword id="KW-1185">Reference proteome</keyword>
<keyword id="KW-0677">Repeat</keyword>
<keyword id="KW-0732">Signal</keyword>
<keyword id="KW-0812">Transmembrane</keyword>
<keyword id="KW-1133">Transmembrane helix</keyword>
<keyword id="KW-0832">Ubl conjugation</keyword>
<name>TLR4_PIG</name>
<proteinExistence type="evidence at transcript level"/>
<comment type="function">
    <text evidence="2">Transmembrane receptor that functions as a pattern recognition receptor recognizing pathogen- and damage-associated molecular patterns (PAMPs and DAMPs) to induce innate immune responses via downstream signaling pathways. At the plasma membrane, cooperates with LY96 to mediate the innate immune response to bacterial lipopolysaccharide (LPS). Also involved in LPS-independent inflammatory responses triggered by free fatty acids, such as palmitate, and Ni(2+). Mechanistically, acts via MYD88, TIRAP and TRAF6, leading to NF-kappa-B activation, cytokine secretion and the inflammatory response. Alternatively, CD14-mediated TLR4 internalization via endocytosis is associated with the initiation of a MYD88-independent signaling via the TICAM1-TBK1-IRF3 axis leading to type I interferon production. In addition to the secretion of proinflammatory cytokines, initiates the activation of NLRP3 inflammasome and formation of a positive feedback loop between autophagy and NF-kappa-B signaling cascade. In complex with TLR6, promotes inflammation in monocytes/macrophages by associating with TLR6 and the receptor CD86. Upon ligand binding, such as oxLDL or amyloid-beta 42, the TLR4:TLR6 complex is internalized and triggers inflammatory response, leading to NF-kappa-B-dependent production of CXCL1, CXCL2 and CCL9 cytokines, via MYD88 signaling pathway, and CCL5 cytokine, via TICAM1 signaling pathway. In myeloid dendritic cells, vesicular stomatitis virus glycoprotein G but not LPS promotes the activation of IRF7, leading to type I IFN production in a CD14-dependent manner.</text>
</comment>
<comment type="subunit">
    <text evidence="2 3">Belongs to the lipopolysaccharide (LPS) receptor, a multi-protein complex containing at least CD14, LY96 and TLR4. Binding to bacterial LPS leads to homodimerization. Interacts with LY96 via the extracellular domain. Interacts with MYD88 and TIRAP via their respective TIR domains. Interacts with NOX4. Interacts with CNPY3 and HSP90B1; this interaction is required for proper folding in the endoplasmic reticulum. Interacts with MAP3K21; this interaction leads to negative regulation of TLR4 signaling. Interacts with CD36, following CD36 stimulation by oxLDL or amyloid-beta 42, and forms a heterodimer with TLR6. The trimeric complex is internalized and triggers inflammatory response. LYN kinase activity facilitates TLR4-TLR6 heterodimerization and signal initiation. Interacts with TICAM1 in response to LPS in a WDFY1-dependent manner. Interacts with WDFY1 in response to LPS. Interacts with SMPDL3B. Interacts with CEACAM1; upon lipopolysaccharide stimulation, forms a complex including TLR4 and the phosphorylated form of SYK and CEACAM1, which in turn, recruits PTPN6 that dephosphorylates SYK, reducing the production of reactive oxygen species (ROS) and lysosome disruption, which in turn, reduces the activity of the inflammasome. Interacts with RFTN1; the interaction occurs in response to lipopolysaccharide stimulation. Interacts with SCIMP; the interaction occurs in response to lipopolysaccharide stimulation and is enhanced by phosphorylation of SCIMP by LYN (By similarity). This interaction facilitates the phosphorylation of TLR4 by LYN which elicits a selective cytokine response in macrophages (By similarity). Interacts with TRAF3IP3 (By similarity). Interacts with TREM1; this interaction enhances TLR4-mediated inflammatory response (By similarity). Interacts with ZG16B/PAUF (By similarity). Interacts with CD82; this interaction inhibits TLR4-mediated signaling pathway (By similarity).</text>
</comment>
<comment type="subcellular location">
    <subcellularLocation>
        <location evidence="2">Cell membrane</location>
        <topology evidence="2">Single-pass type I membrane protein</topology>
    </subcellularLocation>
    <subcellularLocation>
        <location evidence="2">Early endosome</location>
    </subcellularLocation>
    <subcellularLocation>
        <location evidence="3">Cell projection</location>
        <location evidence="3">Ruffle</location>
    </subcellularLocation>
    <text evidence="2">Upon complex formation with CD36 and TLR6, internalized through dynamin-dependent endocytosis. Colocalizes with RFTN1 at cell membrane and then together with RFTN1 moves to endosomes, upon lipopolysaccharide stimulation.</text>
</comment>
<comment type="domain">
    <text evidence="1">The TIR domain mediates interaction with NOX4.</text>
</comment>
<comment type="PTM">
    <text evidence="3">Phosphorylated on tyrosine residues by LYN after binding lipopolysaccharide.</text>
</comment>
<comment type="PTM">
    <text evidence="2">Ubiquitinated by RNF128 via 'Lys-28'-linked polyubiquitin chains, leading to proteasomal degradation.</text>
</comment>
<comment type="similarity">
    <text evidence="6">Belongs to the Toll-like receptor family.</text>
</comment>
<comment type="caution">
    <text evidence="2 6">In some plant proteins and in human SARM1, the TIR domain has NAD(+) hydrolase (NADase) activity (By similarity). However, despite the presence of the catalytic Asp residue, the isolated TIR domain of human TLR4 lacks NADase activity (By similarity). Based on this, it is unlikely that Toll-like receptors have NADase activity.</text>
</comment>
<protein>
    <recommendedName>
        <fullName>Toll-like receptor 4</fullName>
    </recommendedName>
    <cdAntigenName>CD284</cdAntigenName>
</protein>
<reference key="1">
    <citation type="submission" date="2004-08" db="EMBL/GenBank/DDBJ databases">
        <title>The function of porcine TLR4 gene.</title>
        <authorList>
            <person name="Shinkai H."/>
            <person name="Uenishi H."/>
        </authorList>
    </citation>
    <scope>NUCLEOTIDE SEQUENCE [MRNA]</scope>
    <source>
        <tissue>Alveolus</tissue>
    </source>
</reference>
<organism>
    <name type="scientific">Sus scrofa</name>
    <name type="common">Pig</name>
    <dbReference type="NCBI Taxonomy" id="9823"/>
    <lineage>
        <taxon>Eukaryota</taxon>
        <taxon>Metazoa</taxon>
        <taxon>Chordata</taxon>
        <taxon>Craniata</taxon>
        <taxon>Vertebrata</taxon>
        <taxon>Euteleostomi</taxon>
        <taxon>Mammalia</taxon>
        <taxon>Eutheria</taxon>
        <taxon>Laurasiatheria</taxon>
        <taxon>Artiodactyla</taxon>
        <taxon>Suina</taxon>
        <taxon>Suidae</taxon>
        <taxon>Sus</taxon>
    </lineage>
</organism>
<dbReference type="EMBL" id="AB188301">
    <property type="protein sequence ID" value="BAD36843.1"/>
    <property type="molecule type" value="mRNA"/>
</dbReference>
<dbReference type="SMR" id="Q68Y56"/>
<dbReference type="FunCoup" id="Q68Y56">
    <property type="interactions" value="156"/>
</dbReference>
<dbReference type="STRING" id="9823.ENSSSCP00000060828"/>
<dbReference type="GlyCosmos" id="Q68Y56">
    <property type="glycosylation" value="8 sites, No reported glycans"/>
</dbReference>
<dbReference type="GlyGen" id="Q68Y56">
    <property type="glycosylation" value="8 sites"/>
</dbReference>
<dbReference type="PaxDb" id="9823-ENSSSCP00000005897"/>
<dbReference type="eggNOG" id="KOG4641">
    <property type="taxonomic scope" value="Eukaryota"/>
</dbReference>
<dbReference type="InParanoid" id="Q68Y56"/>
<dbReference type="Proteomes" id="UP000008227">
    <property type="component" value="Unplaced"/>
</dbReference>
<dbReference type="Proteomes" id="UP000314985">
    <property type="component" value="Unplaced"/>
</dbReference>
<dbReference type="Proteomes" id="UP000694570">
    <property type="component" value="Unplaced"/>
</dbReference>
<dbReference type="Proteomes" id="UP000694571">
    <property type="component" value="Unplaced"/>
</dbReference>
<dbReference type="Proteomes" id="UP000694720">
    <property type="component" value="Unplaced"/>
</dbReference>
<dbReference type="Proteomes" id="UP000694722">
    <property type="component" value="Unplaced"/>
</dbReference>
<dbReference type="Proteomes" id="UP000694723">
    <property type="component" value="Unplaced"/>
</dbReference>
<dbReference type="Proteomes" id="UP000694724">
    <property type="component" value="Unplaced"/>
</dbReference>
<dbReference type="Proteomes" id="UP000694725">
    <property type="component" value="Unplaced"/>
</dbReference>
<dbReference type="Proteomes" id="UP000694726">
    <property type="component" value="Unplaced"/>
</dbReference>
<dbReference type="Proteomes" id="UP000694727">
    <property type="component" value="Unplaced"/>
</dbReference>
<dbReference type="Proteomes" id="UP000694728">
    <property type="component" value="Unplaced"/>
</dbReference>
<dbReference type="GO" id="GO:0005769">
    <property type="term" value="C:early endosome"/>
    <property type="evidence" value="ECO:0007669"/>
    <property type="project" value="UniProtKB-SubCell"/>
</dbReference>
<dbReference type="GO" id="GO:0046696">
    <property type="term" value="C:lipopolysaccharide receptor complex"/>
    <property type="evidence" value="ECO:0000250"/>
    <property type="project" value="UniProtKB"/>
</dbReference>
<dbReference type="GO" id="GO:0005886">
    <property type="term" value="C:plasma membrane"/>
    <property type="evidence" value="ECO:0000250"/>
    <property type="project" value="UniProtKB"/>
</dbReference>
<dbReference type="GO" id="GO:0001726">
    <property type="term" value="C:ruffle"/>
    <property type="evidence" value="ECO:0007669"/>
    <property type="project" value="UniProtKB-SubCell"/>
</dbReference>
<dbReference type="GO" id="GO:0001530">
    <property type="term" value="F:lipopolysaccharide binding"/>
    <property type="evidence" value="ECO:0000318"/>
    <property type="project" value="GO_Central"/>
</dbReference>
<dbReference type="GO" id="GO:0001875">
    <property type="term" value="F:lipopolysaccharide immune receptor activity"/>
    <property type="evidence" value="ECO:0000250"/>
    <property type="project" value="UniProtKB"/>
</dbReference>
<dbReference type="GO" id="GO:0061809">
    <property type="term" value="F:NAD+ nucleosidase activity, cyclic ADP-ribose generating"/>
    <property type="evidence" value="ECO:0007669"/>
    <property type="project" value="UniProtKB-EC"/>
</dbReference>
<dbReference type="GO" id="GO:0004888">
    <property type="term" value="F:transmembrane signaling receptor activity"/>
    <property type="evidence" value="ECO:0007669"/>
    <property type="project" value="InterPro"/>
</dbReference>
<dbReference type="GO" id="GO:0050829">
    <property type="term" value="P:defense response to Gram-negative bacterium"/>
    <property type="evidence" value="ECO:0000318"/>
    <property type="project" value="GO_Central"/>
</dbReference>
<dbReference type="GO" id="GO:0032497">
    <property type="term" value="P:detection of lipopolysaccharide"/>
    <property type="evidence" value="ECO:0000250"/>
    <property type="project" value="UniProtKB"/>
</dbReference>
<dbReference type="GO" id="GO:0006954">
    <property type="term" value="P:inflammatory response"/>
    <property type="evidence" value="ECO:0000318"/>
    <property type="project" value="GO_Central"/>
</dbReference>
<dbReference type="GO" id="GO:0045087">
    <property type="term" value="P:innate immune response"/>
    <property type="evidence" value="ECO:0007669"/>
    <property type="project" value="UniProtKB-KW"/>
</dbReference>
<dbReference type="GO" id="GO:0002755">
    <property type="term" value="P:MyD88-dependent toll-like receptor signaling pathway"/>
    <property type="evidence" value="ECO:0000318"/>
    <property type="project" value="GO_Central"/>
</dbReference>
<dbReference type="GO" id="GO:0032731">
    <property type="term" value="P:positive regulation of interleukin-1 beta production"/>
    <property type="evidence" value="ECO:0000250"/>
    <property type="project" value="UniProtKB"/>
</dbReference>
<dbReference type="GO" id="GO:1900227">
    <property type="term" value="P:positive regulation of NLRP3 inflammasome complex assembly"/>
    <property type="evidence" value="ECO:0000250"/>
    <property type="project" value="UniProtKB"/>
</dbReference>
<dbReference type="GO" id="GO:0034142">
    <property type="term" value="P:toll-like receptor 4 signaling pathway"/>
    <property type="evidence" value="ECO:0000318"/>
    <property type="project" value="GO_Central"/>
</dbReference>
<dbReference type="FunFam" id="3.40.50.10140:FF:000006">
    <property type="entry name" value="Toll-like receptor 4"/>
    <property type="match status" value="1"/>
</dbReference>
<dbReference type="FunFam" id="3.80.10.10:FF:000195">
    <property type="entry name" value="Toll-like receptor 4"/>
    <property type="match status" value="1"/>
</dbReference>
<dbReference type="Gene3D" id="3.80.10.10">
    <property type="entry name" value="Ribonuclease Inhibitor"/>
    <property type="match status" value="1"/>
</dbReference>
<dbReference type="Gene3D" id="3.40.50.10140">
    <property type="entry name" value="Toll/interleukin-1 receptor homology (TIR) domain"/>
    <property type="match status" value="1"/>
</dbReference>
<dbReference type="InterPro" id="IPR000483">
    <property type="entry name" value="Cys-rich_flank_reg_C"/>
</dbReference>
<dbReference type="InterPro" id="IPR001611">
    <property type="entry name" value="Leu-rich_rpt"/>
</dbReference>
<dbReference type="InterPro" id="IPR025875">
    <property type="entry name" value="Leu-rich_rpt_4"/>
</dbReference>
<dbReference type="InterPro" id="IPR003591">
    <property type="entry name" value="Leu-rich_rpt_typical-subtyp"/>
</dbReference>
<dbReference type="InterPro" id="IPR032675">
    <property type="entry name" value="LRR_dom_sf"/>
</dbReference>
<dbReference type="InterPro" id="IPR000157">
    <property type="entry name" value="TIR_dom"/>
</dbReference>
<dbReference type="InterPro" id="IPR017241">
    <property type="entry name" value="Toll-like_receptor"/>
</dbReference>
<dbReference type="InterPro" id="IPR035897">
    <property type="entry name" value="Toll_tir_struct_dom_sf"/>
</dbReference>
<dbReference type="PANTHER" id="PTHR24365">
    <property type="entry name" value="TOLL-LIKE RECEPTOR"/>
    <property type="match status" value="1"/>
</dbReference>
<dbReference type="PANTHER" id="PTHR24365:SF521">
    <property type="entry name" value="TOLL-LIKE RECEPTOR 4"/>
    <property type="match status" value="1"/>
</dbReference>
<dbReference type="Pfam" id="PF00560">
    <property type="entry name" value="LRR_1"/>
    <property type="match status" value="2"/>
</dbReference>
<dbReference type="Pfam" id="PF12799">
    <property type="entry name" value="LRR_4"/>
    <property type="match status" value="1"/>
</dbReference>
<dbReference type="Pfam" id="PF13516">
    <property type="entry name" value="LRR_6"/>
    <property type="match status" value="1"/>
</dbReference>
<dbReference type="Pfam" id="PF13855">
    <property type="entry name" value="LRR_8"/>
    <property type="match status" value="3"/>
</dbReference>
<dbReference type="Pfam" id="PF01582">
    <property type="entry name" value="TIR"/>
    <property type="match status" value="1"/>
</dbReference>
<dbReference type="PIRSF" id="PIRSF037595">
    <property type="entry name" value="Toll-like_receptor"/>
    <property type="match status" value="1"/>
</dbReference>
<dbReference type="PRINTS" id="PR00019">
    <property type="entry name" value="LEURICHRPT"/>
</dbReference>
<dbReference type="SMART" id="SM00365">
    <property type="entry name" value="LRR_SD22"/>
    <property type="match status" value="4"/>
</dbReference>
<dbReference type="SMART" id="SM00369">
    <property type="entry name" value="LRR_TYP"/>
    <property type="match status" value="13"/>
</dbReference>
<dbReference type="SMART" id="SM00082">
    <property type="entry name" value="LRRCT"/>
    <property type="match status" value="1"/>
</dbReference>
<dbReference type="SMART" id="SM00255">
    <property type="entry name" value="TIR"/>
    <property type="match status" value="1"/>
</dbReference>
<dbReference type="SUPFAM" id="SSF52058">
    <property type="entry name" value="L domain-like"/>
    <property type="match status" value="3"/>
</dbReference>
<dbReference type="SUPFAM" id="SSF52200">
    <property type="entry name" value="Toll/Interleukin receptor TIR domain"/>
    <property type="match status" value="1"/>
</dbReference>
<dbReference type="PROSITE" id="PS51450">
    <property type="entry name" value="LRR"/>
    <property type="match status" value="11"/>
</dbReference>
<dbReference type="PROSITE" id="PS50104">
    <property type="entry name" value="TIR"/>
    <property type="match status" value="1"/>
</dbReference>
<feature type="signal peptide" evidence="4">
    <location>
        <begin position="1"/>
        <end position="23"/>
    </location>
</feature>
<feature type="chain" id="PRO_0000034726" description="Toll-like receptor 4">
    <location>
        <begin position="24"/>
        <end position="841"/>
    </location>
</feature>
<feature type="topological domain" description="Extracellular" evidence="4">
    <location>
        <begin position="24"/>
        <end position="632"/>
    </location>
</feature>
<feature type="transmembrane region" description="Helical" evidence="4">
    <location>
        <begin position="633"/>
        <end position="653"/>
    </location>
</feature>
<feature type="topological domain" description="Cytoplasmic" evidence="4">
    <location>
        <begin position="654"/>
        <end position="841"/>
    </location>
</feature>
<feature type="repeat" description="LRR 1">
    <location>
        <begin position="55"/>
        <end position="76"/>
    </location>
</feature>
<feature type="repeat" description="LRR 2">
    <location>
        <begin position="79"/>
        <end position="100"/>
    </location>
</feature>
<feature type="repeat" description="LRR 3">
    <location>
        <begin position="103"/>
        <end position="124"/>
    </location>
</feature>
<feature type="repeat" description="LRR 4">
    <location>
        <begin position="127"/>
        <end position="148"/>
    </location>
</feature>
<feature type="repeat" description="LRR 5">
    <location>
        <begin position="151"/>
        <end position="172"/>
    </location>
</feature>
<feature type="repeat" description="LRR 6">
    <location>
        <begin position="176"/>
        <end position="197"/>
    </location>
</feature>
<feature type="repeat" description="LRR 7">
    <location>
        <begin position="205"/>
        <end position="225"/>
    </location>
</feature>
<feature type="repeat" description="LRR 8">
    <location>
        <begin position="374"/>
        <end position="395"/>
    </location>
</feature>
<feature type="repeat" description="LRR 9">
    <location>
        <begin position="400"/>
        <end position="422"/>
    </location>
</feature>
<feature type="repeat" description="LRR 10">
    <location>
        <begin position="423"/>
        <end position="444"/>
    </location>
</feature>
<feature type="repeat" description="LRR 11">
    <location>
        <begin position="448"/>
        <end position="469"/>
    </location>
</feature>
<feature type="repeat" description="LRR 12">
    <location>
        <begin position="472"/>
        <end position="495"/>
    </location>
</feature>
<feature type="repeat" description="LRR 13">
    <location>
        <begin position="497"/>
        <end position="518"/>
    </location>
</feature>
<feature type="repeat" description="LRR 14">
    <location>
        <begin position="521"/>
        <end position="542"/>
    </location>
</feature>
<feature type="repeat" description="LRR 15">
    <location>
        <begin position="545"/>
        <end position="568"/>
    </location>
</feature>
<feature type="domain" description="LRRCT">
    <location>
        <begin position="579"/>
        <end position="630"/>
    </location>
</feature>
<feature type="domain" description="TIR" evidence="5">
    <location>
        <begin position="673"/>
        <end position="816"/>
    </location>
</feature>
<feature type="glycosylation site" description="N-linked (GlcNAc...) asparagine" evidence="4">
    <location>
        <position position="35"/>
    </location>
</feature>
<feature type="glycosylation site" description="N-linked (GlcNAc...) asparagine" evidence="4">
    <location>
        <position position="205"/>
    </location>
</feature>
<feature type="glycosylation site" description="N-linked (GlcNAc...) asparagine" evidence="4">
    <location>
        <position position="238"/>
    </location>
</feature>
<feature type="glycosylation site" description="N-linked (GlcNAc...) asparagine" evidence="4">
    <location>
        <position position="282"/>
    </location>
</feature>
<feature type="glycosylation site" description="N-linked (GlcNAc...) asparagine" evidence="4">
    <location>
        <position position="309"/>
    </location>
</feature>
<feature type="glycosylation site" description="N-linked (GlcNAc...) asparagine" evidence="4">
    <location>
        <position position="526"/>
    </location>
</feature>
<feature type="glycosylation site" description="N-linked (GlcNAc...) asparagine" evidence="4">
    <location>
        <position position="575"/>
    </location>
</feature>
<feature type="glycosylation site" description="N-linked (GlcNAc...) asparagine" evidence="4">
    <location>
        <position position="625"/>
    </location>
</feature>
<feature type="disulfide bond" evidence="1">
    <location>
        <begin position="29"/>
        <end position="40"/>
    </location>
</feature>
<feature type="disulfide bond" evidence="1">
    <location>
        <begin position="281"/>
        <end position="306"/>
    </location>
</feature>
<feature type="disulfide bond" evidence="1">
    <location>
        <begin position="390"/>
        <end position="391"/>
    </location>
</feature>
<feature type="disulfide bond" evidence="1">
    <location>
        <begin position="583"/>
        <end position="609"/>
    </location>
</feature>
<feature type="disulfide bond" evidence="1">
    <location>
        <begin position="585"/>
        <end position="628"/>
    </location>
</feature>
<accession>Q68Y56</accession>
<gene>
    <name type="primary">TLR4</name>
</gene>